<geneLocation type="plasmid">
    <name>pMB1</name>
</geneLocation>
<geneLocation type="plasmid">
    <name>pMB4</name>
</geneLocation>
<sequence length="277" mass="31059">MSNKKQSNRLTEQHKLSQGVIGIFGDYAKAHDLAVGEVSKLVKKALSNEYPQLSFRYRDSIKKTEINEALKKIDPDLGGTLFVSNSSIKPDGGIVEVKDDYGEWRVVLVAEAKHQGKDIINIRNGLLVGKRGDQDLMAAGNAIERSHKNISEIANFMLSESHFPYVLFLEGSNFLTENISITRPDGRVVNLEYNSGILNRLDRLTAANYGMPINSNLCINKFVNHKDKSIMLQAASIYTQGDGREWDSKIMFEIMFDISTTSLRVLGRDLFEQLTSK</sequence>
<keyword id="KW-0002">3D-structure</keyword>
<keyword id="KW-0903">Direct protein sequencing</keyword>
<keyword id="KW-0255">Endonuclease</keyword>
<keyword id="KW-0378">Hydrolase</keyword>
<keyword id="KW-0460">Magnesium</keyword>
<keyword id="KW-0479">Metal-binding</keyword>
<keyword id="KW-0540">Nuclease</keyword>
<keyword id="KW-0614">Plasmid</keyword>
<keyword id="KW-0680">Restriction system</keyword>
<dbReference type="EC" id="3.1.21.4" evidence="2"/>
<dbReference type="EMBL" id="J01675">
    <property type="protein sequence ID" value="AAA26371.1"/>
    <property type="molecule type" value="Genomic_DNA"/>
</dbReference>
<dbReference type="PIR" id="B92308">
    <property type="entry name" value="NDECP4"/>
</dbReference>
<dbReference type="RefSeq" id="WP_001565219.1">
    <property type="nucleotide sequence ID" value="NZ_SQMQ01000003.1"/>
</dbReference>
<dbReference type="PDB" id="1CKQ">
    <property type="method" value="X-ray"/>
    <property type="resolution" value="1.85 A"/>
    <property type="chains" value="A=2-277"/>
</dbReference>
<dbReference type="PDB" id="1CL8">
    <property type="method" value="X-ray"/>
    <property type="resolution" value="1.80 A"/>
    <property type="chains" value="A=2-277"/>
</dbReference>
<dbReference type="PDB" id="1ERI">
    <property type="method" value="X-ray"/>
    <property type="resolution" value="2.50 A"/>
    <property type="chains" value="A=2-277"/>
</dbReference>
<dbReference type="PDB" id="1QC9">
    <property type="method" value="X-ray"/>
    <property type="resolution" value="3.00 A"/>
    <property type="chains" value="A/B/C=2-277"/>
</dbReference>
<dbReference type="PDB" id="1QPS">
    <property type="method" value="X-ray"/>
    <property type="resolution" value="2.50 A"/>
    <property type="chains" value="A=17-277"/>
</dbReference>
<dbReference type="PDB" id="1QRH">
    <property type="method" value="X-ray"/>
    <property type="resolution" value="2.50 A"/>
    <property type="chains" value="A=17-277"/>
</dbReference>
<dbReference type="PDB" id="1QRI">
    <property type="method" value="X-ray"/>
    <property type="resolution" value="2.60 A"/>
    <property type="chains" value="A=17-277"/>
</dbReference>
<dbReference type="PDB" id="2OXV">
    <property type="method" value="X-ray"/>
    <property type="resolution" value="1.95 A"/>
    <property type="chains" value="A=1-277"/>
</dbReference>
<dbReference type="PDBsum" id="1CKQ"/>
<dbReference type="PDBsum" id="1CL8"/>
<dbReference type="PDBsum" id="1ERI"/>
<dbReference type="PDBsum" id="1QC9"/>
<dbReference type="PDBsum" id="1QPS"/>
<dbReference type="PDBsum" id="1QRH"/>
<dbReference type="PDBsum" id="1QRI"/>
<dbReference type="PDBsum" id="2OXV"/>
<dbReference type="SMR" id="P00642"/>
<dbReference type="DIP" id="DIP-16997N"/>
<dbReference type="BindingDB" id="P00642"/>
<dbReference type="ChEMBL" id="CHEMBL5729"/>
<dbReference type="REBASE" id="993">
    <property type="entry name" value="EcoRI"/>
</dbReference>
<dbReference type="PATRIC" id="fig|562.8010.peg.1144"/>
<dbReference type="BRENDA" id="3.1.21.4">
    <property type="organism ID" value="2026"/>
</dbReference>
<dbReference type="EvolutionaryTrace" id="P00642"/>
<dbReference type="PRO" id="PR:P00642"/>
<dbReference type="GO" id="GO:0003677">
    <property type="term" value="F:DNA binding"/>
    <property type="evidence" value="ECO:0007669"/>
    <property type="project" value="InterPro"/>
</dbReference>
<dbReference type="GO" id="GO:0000287">
    <property type="term" value="F:magnesium ion binding"/>
    <property type="evidence" value="ECO:0007669"/>
    <property type="project" value="InterPro"/>
</dbReference>
<dbReference type="GO" id="GO:0009036">
    <property type="term" value="F:type II site-specific deoxyribonuclease activity"/>
    <property type="evidence" value="ECO:0007669"/>
    <property type="project" value="UniProtKB-EC"/>
</dbReference>
<dbReference type="GO" id="GO:0009307">
    <property type="term" value="P:DNA restriction-modification system"/>
    <property type="evidence" value="ECO:0007669"/>
    <property type="project" value="UniProtKB-KW"/>
</dbReference>
<dbReference type="CDD" id="cd00943">
    <property type="entry name" value="EcoRI-like"/>
    <property type="match status" value="1"/>
</dbReference>
<dbReference type="Gene3D" id="3.40.580.10">
    <property type="entry name" value="Eco RI Endonuclease, subunit A"/>
    <property type="match status" value="1"/>
</dbReference>
<dbReference type="InterPro" id="IPR011335">
    <property type="entry name" value="Restrct_endonuc-II-like"/>
</dbReference>
<dbReference type="InterPro" id="IPR004221">
    <property type="entry name" value="Restrct_endonuc_II_EcoRI"/>
</dbReference>
<dbReference type="InterPro" id="IPR011336">
    <property type="entry name" value="Restrct_endonuc_II_EcoRI/MunI"/>
</dbReference>
<dbReference type="InterPro" id="IPR018131">
    <property type="entry name" value="Restrct_endonuc_II_EcoRI_Pbac"/>
</dbReference>
<dbReference type="Pfam" id="PF02963">
    <property type="entry name" value="EcoRI"/>
    <property type="match status" value="1"/>
</dbReference>
<dbReference type="PIRSF" id="PIRSF001002">
    <property type="entry name" value="Restrict_endonuc_II_EcoRI"/>
    <property type="match status" value="1"/>
</dbReference>
<dbReference type="SUPFAM" id="SSF52980">
    <property type="entry name" value="Restriction endonuclease-like"/>
    <property type="match status" value="1"/>
</dbReference>
<proteinExistence type="evidence at protein level"/>
<evidence type="ECO:0000269" key="1">
    <source>
    </source>
</evidence>
<evidence type="ECO:0000269" key="2">
    <source>
    </source>
</evidence>
<evidence type="ECO:0000269" key="3">
    <source>
    </source>
</evidence>
<evidence type="ECO:0000303" key="4">
    <source>
    </source>
</evidence>
<evidence type="ECO:0000303" key="5">
    <source>
    </source>
</evidence>
<evidence type="ECO:0007744" key="6">
    <source>
        <dbReference type="PDB" id="1ERI"/>
    </source>
</evidence>
<evidence type="ECO:0007829" key="7">
    <source>
        <dbReference type="PDB" id="1CKQ"/>
    </source>
</evidence>
<evidence type="ECO:0007829" key="8">
    <source>
        <dbReference type="PDB" id="1CL8"/>
    </source>
</evidence>
<evidence type="ECO:0007829" key="9">
    <source>
        <dbReference type="PDB" id="1ERI"/>
    </source>
</evidence>
<evidence type="ECO:0007829" key="10">
    <source>
        <dbReference type="PDB" id="1QPS"/>
    </source>
</evidence>
<reference key="1">
    <citation type="journal article" date="1981" name="J. Biol. Chem.">
        <title>Sequence analysis of the DNA encoding the Eco RI endonuclease and methylase.</title>
        <authorList>
            <person name="Greene P.J."/>
            <person name="Gupta M."/>
            <person name="Boyer H.W."/>
            <person name="Brown W.E."/>
            <person name="Rosenberg J.M."/>
        </authorList>
    </citation>
    <scope>NUCLEOTIDE SEQUENCE [GENOMIC DNA]</scope>
    <source>
        <plasmid>pMB1</plasmid>
    </source>
</reference>
<reference key="2">
    <citation type="journal article" date="1981" name="J. Biol. Chem.">
        <title>DNA sequences of structural genes for Eco RI DNA restriction and modification enzymes.</title>
        <authorList>
            <person name="Newman A.K."/>
            <person name="Rubin R.A."/>
            <person name="Kim S.-H."/>
            <person name="Modrich P."/>
        </authorList>
    </citation>
    <scope>NUCLEOTIDE SEQUENCE [GENOMIC DNA]</scope>
    <source>
        <strain>C</strain>
        <plasmid>pMB4</plasmid>
    </source>
</reference>
<reference key="3">
    <citation type="journal article" date="1981" name="J. Biol. Chem.">
        <title>Partial NH2- and COOH-terminal sequence analyses of Eco RI DNA restriction and modification enzymes.</title>
        <authorList>
            <person name="Rubin R.A."/>
            <person name="Modrich P."/>
            <person name="Vanaman T.C."/>
        </authorList>
    </citation>
    <scope>PROTEIN SEQUENCE OF 2-13</scope>
    <scope>PROTEIN SEQUENCE OF C-TERMINUS</scope>
</reference>
<reference key="4">
    <citation type="journal article" date="1988" name="Nucleic Acids Res.">
        <title>Restriction endonuclease RsrI from Rhodobacter sphaeroides, an isoschizomer of EcoRI: purification and properties.</title>
        <authorList>
            <person name="Aiken C."/>
            <person name="Gumport R.I."/>
        </authorList>
    </citation>
    <scope>FAMILY</scope>
</reference>
<reference key="5">
    <citation type="journal article" date="2003" name="Nucleic Acids Res.">
        <title>A nomenclature for restriction enzymes, DNA methyltransferases, homing endonucleases and their genes.</title>
        <authorList>
            <person name="Roberts R.J."/>
            <person name="Belfort M."/>
            <person name="Bestor T."/>
            <person name="Bhagwat A.S."/>
            <person name="Bickle T.A."/>
            <person name="Bitinaite J."/>
            <person name="Blumenthal R.M."/>
            <person name="Degtyarev S.K."/>
            <person name="Dryden D.T."/>
            <person name="Dybvig K."/>
            <person name="Firman K."/>
            <person name="Gromova E.S."/>
            <person name="Gumport R.I."/>
            <person name="Halford S.E."/>
            <person name="Hattman S."/>
            <person name="Heitman J."/>
            <person name="Hornby D.P."/>
            <person name="Janulaitis A."/>
            <person name="Jeltsch A."/>
            <person name="Josephsen J."/>
            <person name="Kiss A."/>
            <person name="Klaenhammer T.R."/>
            <person name="Kobayashi I."/>
            <person name="Kong H."/>
            <person name="Krueger D.H."/>
            <person name="Lacks S."/>
            <person name="Marinus M.G."/>
            <person name="Miyahara M."/>
            <person name="Morgan R.D."/>
            <person name="Murray N.E."/>
            <person name="Nagaraja V."/>
            <person name="Piekarowicz A."/>
            <person name="Pingoud A."/>
            <person name="Raleigh E."/>
            <person name="Rao D.N."/>
            <person name="Reich N."/>
            <person name="Repin V.E."/>
            <person name="Selker E.U."/>
            <person name="Shaw P.C."/>
            <person name="Stein D.C."/>
            <person name="Stoddard B.L."/>
            <person name="Szybalski W."/>
            <person name="Trautner T.A."/>
            <person name="Van Etten J.L."/>
            <person name="Vitor J.M."/>
            <person name="Wilson G.G."/>
            <person name="Xu S.Y."/>
        </authorList>
    </citation>
    <scope>NOMENCLATURE</scope>
    <scope>SUBTYPE</scope>
</reference>
<reference key="6">
    <citation type="journal article" date="1986" name="Science">
        <title>Structure of the DNA-Eco RI endonuclease recognition complex at 3-A resolution.</title>
        <authorList>
            <person name="McClarin J.A."/>
            <person name="Frederick C.A."/>
            <person name="Wang B.-C."/>
            <person name="Greene P."/>
            <person name="Boyer H.W."/>
            <person name="Grable J."/>
            <person name="Rosenberg J.M."/>
        </authorList>
    </citation>
    <scope>X-RAY CRYSTALLOGRAPHY (3.0 ANGSTROMS)</scope>
    <scope>SUBUNIT</scope>
</reference>
<reference evidence="6" key="7">
    <citation type="journal article" date="1990" name="Science">
        <title>Refinement of Eco RI endonuclease crystal structure: a revised protein chain tracing.</title>
        <authorList>
            <person name="Kim Y."/>
            <person name="Grable J.C."/>
            <person name="Love R."/>
            <person name="Greene P.J."/>
            <person name="Rosenberg J.M."/>
        </authorList>
    </citation>
    <scope>X-RAY CRYSTALLOGRAPHY (2.7 ANGSTROMS)</scope>
</reference>
<reference key="8">
    <citation type="journal article" date="1991" name="Curr. Opin. Struct. Biol.">
        <title>Structure and function of restriction endonucleases.</title>
        <authorList>
            <person name="Rosenberg J.M."/>
        </authorList>
    </citation>
    <scope>REVIEW</scope>
</reference>
<reference key="9">
    <citation type="journal article" date="1990" name="J. Biol. Chem.">
        <title>Probing the role of glutamic acid 144 in the EcoRI endonuclease using aspartic acid and glutamine replacements.</title>
        <authorList>
            <person name="Hager P.W."/>
            <person name="Reich N.O."/>
            <person name="Day J.P."/>
            <person name="Coche T.G."/>
            <person name="Boyer H.W."/>
            <person name="Rosenberg J.M."/>
            <person name="Greene P.J."/>
        </authorList>
    </citation>
    <scope>MUTAGENESIS OF GLU-144</scope>
</reference>
<organism>
    <name type="scientific">Escherichia coli</name>
    <dbReference type="NCBI Taxonomy" id="562"/>
    <lineage>
        <taxon>Bacteria</taxon>
        <taxon>Pseudomonadati</taxon>
        <taxon>Pseudomonadota</taxon>
        <taxon>Gammaproteobacteria</taxon>
        <taxon>Enterobacterales</taxon>
        <taxon>Enterobacteriaceae</taxon>
        <taxon>Escherichia</taxon>
    </lineage>
</organism>
<gene>
    <name type="primary">ecoRIR</name>
</gene>
<name>T2E1_ECOLX</name>
<comment type="function">
    <text evidence="2 4">A P subtype restriction enzyme that recognizes the double-stranded sequence 5'-GAATTC-3' and cleaves after G-1.</text>
</comment>
<comment type="catalytic activity">
    <reaction evidence="2">
        <text>Endonucleolytic cleavage of DNA to give specific double-stranded fragments with terminal 5'-phosphates.</text>
        <dbReference type="EC" id="3.1.21.4"/>
    </reaction>
</comment>
<comment type="cofactor">
    <cofactor>
        <name>Mg(2+)</name>
        <dbReference type="ChEBI" id="CHEBI:18420"/>
    </cofactor>
    <text>Binds 2 magnesium ions per subunit.</text>
</comment>
<comment type="subunit">
    <text evidence="2">Homodimer.</text>
</comment>
<comment type="similarity">
    <text evidence="5">Belongs to the EcoRI type II restriction endonuclease family.</text>
</comment>
<feature type="initiator methionine" description="Removed" evidence="3">
    <location>
        <position position="1"/>
    </location>
</feature>
<feature type="chain" id="PRO_0000077303" description="Type II restriction enzyme EcoRI">
    <location>
        <begin position="2"/>
        <end position="277"/>
    </location>
</feature>
<feature type="active site">
    <location>
        <position position="91"/>
    </location>
</feature>
<feature type="active site">
    <location>
        <position position="111"/>
    </location>
</feature>
<feature type="active site">
    <location>
        <position position="113"/>
    </location>
</feature>
<feature type="binding site">
    <location>
        <position position="91"/>
    </location>
    <ligand>
        <name>Mg(2+)</name>
        <dbReference type="ChEBI" id="CHEBI:18420"/>
        <label>1</label>
    </ligand>
</feature>
<feature type="binding site">
    <location>
        <position position="91"/>
    </location>
    <ligand>
        <name>Mg(2+)</name>
        <dbReference type="ChEBI" id="CHEBI:18420"/>
        <label>2</label>
    </ligand>
</feature>
<feature type="binding site">
    <location>
        <position position="111"/>
    </location>
    <ligand>
        <name>Mg(2+)</name>
        <dbReference type="ChEBI" id="CHEBI:18420"/>
        <label>1</label>
    </ligand>
</feature>
<feature type="mutagenesis site" description="Only nicks double strand DNA." evidence="1">
    <original>E</original>
    <variation>D</variation>
    <location>
        <position position="144"/>
    </location>
</feature>
<feature type="mutagenesis site" description="Inactivates the enzyme." evidence="1">
    <original>E</original>
    <variation>Q</variation>
    <location>
        <position position="144"/>
    </location>
</feature>
<feature type="helix" evidence="8">
    <location>
        <begin position="21"/>
        <end position="31"/>
    </location>
</feature>
<feature type="helix" evidence="8">
    <location>
        <begin position="35"/>
        <end position="49"/>
    </location>
</feature>
<feature type="strand" evidence="8">
    <location>
        <begin position="55"/>
        <end position="59"/>
    </location>
</feature>
<feature type="helix" evidence="8">
    <location>
        <begin position="63"/>
        <end position="73"/>
    </location>
</feature>
<feature type="strand" evidence="8">
    <location>
        <begin position="94"/>
        <end position="98"/>
    </location>
</feature>
<feature type="strand" evidence="8">
    <location>
        <begin position="104"/>
        <end position="114"/>
    </location>
</feature>
<feature type="helix" evidence="8">
    <location>
        <begin position="118"/>
        <end position="123"/>
    </location>
</feature>
<feature type="turn" evidence="8">
    <location>
        <begin position="129"/>
        <end position="132"/>
    </location>
</feature>
<feature type="strand" evidence="8">
    <location>
        <begin position="134"/>
        <end position="136"/>
    </location>
</feature>
<feature type="helix" evidence="8">
    <location>
        <begin position="142"/>
        <end position="145"/>
    </location>
</feature>
<feature type="helix" evidence="8">
    <location>
        <begin position="146"/>
        <end position="156"/>
    </location>
</feature>
<feature type="turn" evidence="8">
    <location>
        <begin position="157"/>
        <end position="159"/>
    </location>
</feature>
<feature type="strand" evidence="7">
    <location>
        <begin position="160"/>
        <end position="162"/>
    </location>
</feature>
<feature type="strand" evidence="8">
    <location>
        <begin position="165"/>
        <end position="171"/>
    </location>
</feature>
<feature type="helix" evidence="10">
    <location>
        <begin position="172"/>
        <end position="174"/>
    </location>
</feature>
<feature type="strand" evidence="8">
    <location>
        <begin position="179"/>
        <end position="182"/>
    </location>
</feature>
<feature type="strand" evidence="9">
    <location>
        <begin position="184"/>
        <end position="186"/>
    </location>
</feature>
<feature type="strand" evidence="8">
    <location>
        <begin position="188"/>
        <end position="191"/>
    </location>
</feature>
<feature type="turn" evidence="8">
    <location>
        <begin position="196"/>
        <end position="198"/>
    </location>
</feature>
<feature type="helix" evidence="8">
    <location>
        <begin position="201"/>
        <end position="203"/>
    </location>
</feature>
<feature type="helix" evidence="8">
    <location>
        <begin position="205"/>
        <end position="208"/>
    </location>
</feature>
<feature type="strand" evidence="8">
    <location>
        <begin position="213"/>
        <end position="215"/>
    </location>
</feature>
<feature type="strand" evidence="8">
    <location>
        <begin position="221"/>
        <end position="223"/>
    </location>
</feature>
<feature type="strand" evidence="7">
    <location>
        <begin position="225"/>
        <end position="227"/>
    </location>
</feature>
<feature type="strand" evidence="8">
    <location>
        <begin position="230"/>
        <end position="232"/>
    </location>
</feature>
<feature type="strand" evidence="8">
    <location>
        <begin position="236"/>
        <end position="239"/>
    </location>
</feature>
<feature type="helix" evidence="8">
    <location>
        <begin position="248"/>
        <end position="265"/>
    </location>
</feature>
<feature type="helix" evidence="8">
    <location>
        <begin position="267"/>
        <end position="269"/>
    </location>
</feature>
<feature type="helix" evidence="8">
    <location>
        <begin position="271"/>
        <end position="275"/>
    </location>
</feature>
<accession>P00642</accession>
<protein>
    <recommendedName>
        <fullName evidence="4">Type II restriction enzyme EcoRI</fullName>
        <shortName>R.EcoRI</shortName>
        <ecNumber evidence="2">3.1.21.4</ecNumber>
    </recommendedName>
    <alternativeName>
        <fullName>Endonuclease EcoRI</fullName>
    </alternativeName>
    <alternativeName>
        <fullName>Type-2 restriction enzyme EcoRI</fullName>
    </alternativeName>
</protein>